<keyword id="KW-0496">Mitochondrion</keyword>
<keyword id="KW-1185">Reference proteome</keyword>
<dbReference type="EMBL" id="KP263414">
    <property type="status" value="NOT_ANNOTATED_CDS"/>
    <property type="molecule type" value="Genomic_DNA"/>
</dbReference>
<dbReference type="PIR" id="S78676">
    <property type="entry name" value="S78676"/>
</dbReference>
<dbReference type="PaxDb" id="4932-Q0144"/>
<dbReference type="EnsemblFungi" id="Q0144_mRNA">
    <property type="protein sequence ID" value="Q0144"/>
    <property type="gene ID" value="Q0144"/>
</dbReference>
<dbReference type="AGR" id="SGD:S000007278"/>
<dbReference type="SGD" id="S000007278">
    <property type="gene designation" value="Q0144"/>
</dbReference>
<dbReference type="HOGENOM" id="CLU_2186029_0_0_1"/>
<dbReference type="InParanoid" id="Q9ZZW2"/>
<dbReference type="Proteomes" id="UP000002311">
    <property type="component" value="Mitochondrion"/>
</dbReference>
<dbReference type="RNAct" id="Q9ZZW2">
    <property type="molecule type" value="protein"/>
</dbReference>
<dbReference type="GO" id="GO:0005739">
    <property type="term" value="C:mitochondrion"/>
    <property type="evidence" value="ECO:0007669"/>
    <property type="project" value="UniProtKB-SubCell"/>
</dbReference>
<name>Q0144_YEAST</name>
<sequence length="109" mass="14136">MFMFFINIIFINNFLNNYKTYIIYIYIYNKWNNYNKNYNYNYIMIMITMGLNITCEQTVMFNPYYYLLYYMYIKMLMLMLMLYYIMLYYIMLYYIMFMIMLYYMIYMTL</sequence>
<geneLocation type="mitochondrion"/>
<evidence type="ECO:0000305" key="1"/>
<proteinExistence type="uncertain"/>
<protein>
    <recommendedName>
        <fullName>Putative uncharacterized protein Q0144, mitochondrial</fullName>
    </recommendedName>
</protein>
<feature type="chain" id="PRO_0000299684" description="Putative uncharacterized protein Q0144, mitochondrial">
    <location>
        <begin position="1"/>
        <end position="109"/>
    </location>
</feature>
<comment type="subcellular location">
    <subcellularLocation>
        <location evidence="1">Mitochondrion</location>
    </subcellularLocation>
</comment>
<comment type="caution">
    <text evidence="1">Product of a dubious gene prediction.</text>
</comment>
<reference key="1">
    <citation type="journal article" date="1998" name="FEBS Lett.">
        <title>The complete sequence of the mitochondrial genome of Saccharomyces cerevisiae.</title>
        <authorList>
            <person name="Foury F."/>
            <person name="Roganti T."/>
            <person name="Lecrenier N."/>
            <person name="Purnelle B."/>
        </authorList>
    </citation>
    <scope>NUCLEOTIDE SEQUENCE [LARGE SCALE GENOMIC DNA]</scope>
    <source>
        <strain>ATCC 96604 / S288c / FY1679</strain>
    </source>
</reference>
<reference key="2">
    <citation type="journal article" date="2014" name="G3 (Bethesda)">
        <title>The reference genome sequence of Saccharomyces cerevisiae: Then and now.</title>
        <authorList>
            <person name="Engel S.R."/>
            <person name="Dietrich F.S."/>
            <person name="Fisk D.G."/>
            <person name="Binkley G."/>
            <person name="Balakrishnan R."/>
            <person name="Costanzo M.C."/>
            <person name="Dwight S.S."/>
            <person name="Hitz B.C."/>
            <person name="Karra K."/>
            <person name="Nash R.S."/>
            <person name="Weng S."/>
            <person name="Wong E.D."/>
            <person name="Lloyd P."/>
            <person name="Skrzypek M.S."/>
            <person name="Miyasato S.R."/>
            <person name="Simison M."/>
            <person name="Cherry J.M."/>
        </authorList>
    </citation>
    <scope>GENOME REANNOTATION</scope>
    <source>
        <strain>ATCC 96604 / S288c / FY1679</strain>
    </source>
</reference>
<accession>Q9ZZW2</accession>
<organism>
    <name type="scientific">Saccharomyces cerevisiae (strain ATCC 204508 / S288c)</name>
    <name type="common">Baker's yeast</name>
    <dbReference type="NCBI Taxonomy" id="559292"/>
    <lineage>
        <taxon>Eukaryota</taxon>
        <taxon>Fungi</taxon>
        <taxon>Dikarya</taxon>
        <taxon>Ascomycota</taxon>
        <taxon>Saccharomycotina</taxon>
        <taxon>Saccharomycetes</taxon>
        <taxon>Saccharomycetales</taxon>
        <taxon>Saccharomycetaceae</taxon>
        <taxon>Saccharomyces</taxon>
    </lineage>
</organism>
<gene>
    <name type="ordered locus">Q0144</name>
</gene>